<keyword id="KW-0997">Cell inner membrane</keyword>
<keyword id="KW-1003">Cell membrane</keyword>
<keyword id="KW-0472">Membrane</keyword>
<keyword id="KW-0520">NAD</keyword>
<keyword id="KW-0874">Quinone</keyword>
<keyword id="KW-1278">Translocase</keyword>
<keyword id="KW-0812">Transmembrane</keyword>
<keyword id="KW-1133">Transmembrane helix</keyword>
<keyword id="KW-0813">Transport</keyword>
<keyword id="KW-0830">Ubiquinone</keyword>
<dbReference type="EC" id="7.1.1.-" evidence="1"/>
<dbReference type="EMBL" id="CP000086">
    <property type="protein sequence ID" value="ABC36474.1"/>
    <property type="molecule type" value="Genomic_DNA"/>
</dbReference>
<dbReference type="RefSeq" id="WP_004185739.1">
    <property type="nucleotide sequence ID" value="NZ_CP008785.1"/>
</dbReference>
<dbReference type="SMR" id="Q2SZM5"/>
<dbReference type="GeneID" id="98107315"/>
<dbReference type="KEGG" id="bte:BTH_I1071"/>
<dbReference type="HOGENOM" id="CLU_144724_2_0_4"/>
<dbReference type="Proteomes" id="UP000001930">
    <property type="component" value="Chromosome I"/>
</dbReference>
<dbReference type="GO" id="GO:0030964">
    <property type="term" value="C:NADH dehydrogenase complex"/>
    <property type="evidence" value="ECO:0007669"/>
    <property type="project" value="TreeGrafter"/>
</dbReference>
<dbReference type="GO" id="GO:0005886">
    <property type="term" value="C:plasma membrane"/>
    <property type="evidence" value="ECO:0007669"/>
    <property type="project" value="UniProtKB-SubCell"/>
</dbReference>
<dbReference type="GO" id="GO:0050136">
    <property type="term" value="F:NADH:ubiquinone reductase (non-electrogenic) activity"/>
    <property type="evidence" value="ECO:0007669"/>
    <property type="project" value="UniProtKB-UniRule"/>
</dbReference>
<dbReference type="GO" id="GO:0048038">
    <property type="term" value="F:quinone binding"/>
    <property type="evidence" value="ECO:0007669"/>
    <property type="project" value="UniProtKB-KW"/>
</dbReference>
<dbReference type="GO" id="GO:0042773">
    <property type="term" value="P:ATP synthesis coupled electron transport"/>
    <property type="evidence" value="ECO:0007669"/>
    <property type="project" value="InterPro"/>
</dbReference>
<dbReference type="FunFam" id="1.10.287.3510:FF:000001">
    <property type="entry name" value="NADH-quinone oxidoreductase subunit K"/>
    <property type="match status" value="1"/>
</dbReference>
<dbReference type="Gene3D" id="1.10.287.3510">
    <property type="match status" value="1"/>
</dbReference>
<dbReference type="HAMAP" id="MF_01456">
    <property type="entry name" value="NDH1_NuoK"/>
    <property type="match status" value="1"/>
</dbReference>
<dbReference type="InterPro" id="IPR001133">
    <property type="entry name" value="NADH_UbQ_OxRdtase_chain4L/K"/>
</dbReference>
<dbReference type="InterPro" id="IPR039428">
    <property type="entry name" value="NUOK/Mnh_C1-like"/>
</dbReference>
<dbReference type="NCBIfam" id="NF004320">
    <property type="entry name" value="PRK05715.1-2"/>
    <property type="match status" value="1"/>
</dbReference>
<dbReference type="NCBIfam" id="NF004321">
    <property type="entry name" value="PRK05715.1-3"/>
    <property type="match status" value="1"/>
</dbReference>
<dbReference type="NCBIfam" id="NF004323">
    <property type="entry name" value="PRK05715.1-5"/>
    <property type="match status" value="1"/>
</dbReference>
<dbReference type="PANTHER" id="PTHR11434:SF21">
    <property type="entry name" value="NADH DEHYDROGENASE SUBUNIT 4L-RELATED"/>
    <property type="match status" value="1"/>
</dbReference>
<dbReference type="PANTHER" id="PTHR11434">
    <property type="entry name" value="NADH-UBIQUINONE OXIDOREDUCTASE SUBUNIT ND4L"/>
    <property type="match status" value="1"/>
</dbReference>
<dbReference type="Pfam" id="PF00420">
    <property type="entry name" value="Oxidored_q2"/>
    <property type="match status" value="1"/>
</dbReference>
<reference key="1">
    <citation type="journal article" date="2005" name="BMC Genomics">
        <title>Bacterial genome adaptation to niches: divergence of the potential virulence genes in three Burkholderia species of different survival strategies.</title>
        <authorList>
            <person name="Kim H.S."/>
            <person name="Schell M.A."/>
            <person name="Yu Y."/>
            <person name="Ulrich R.L."/>
            <person name="Sarria S.H."/>
            <person name="Nierman W.C."/>
            <person name="DeShazer D."/>
        </authorList>
    </citation>
    <scope>NUCLEOTIDE SEQUENCE [LARGE SCALE GENOMIC DNA]</scope>
    <source>
        <strain>ATCC 700388 / DSM 13276 / CCUG 48851 / CIP 106301 / E264</strain>
    </source>
</reference>
<protein>
    <recommendedName>
        <fullName evidence="1">NADH-quinone oxidoreductase subunit K</fullName>
        <ecNumber evidence="1">7.1.1.-</ecNumber>
    </recommendedName>
    <alternativeName>
        <fullName evidence="1">NADH dehydrogenase I subunit K</fullName>
    </alternativeName>
    <alternativeName>
        <fullName evidence="1">NDH-1 subunit K</fullName>
    </alternativeName>
</protein>
<proteinExistence type="inferred from homology"/>
<comment type="function">
    <text evidence="1">NDH-1 shuttles electrons from NADH, via FMN and iron-sulfur (Fe-S) centers, to quinones in the respiratory chain. The immediate electron acceptor for the enzyme in this species is believed to be ubiquinone. Couples the redox reaction to proton translocation (for every two electrons transferred, four hydrogen ions are translocated across the cytoplasmic membrane), and thus conserves the redox energy in a proton gradient.</text>
</comment>
<comment type="catalytic activity">
    <reaction evidence="1">
        <text>a quinone + NADH + 5 H(+)(in) = a quinol + NAD(+) + 4 H(+)(out)</text>
        <dbReference type="Rhea" id="RHEA:57888"/>
        <dbReference type="ChEBI" id="CHEBI:15378"/>
        <dbReference type="ChEBI" id="CHEBI:24646"/>
        <dbReference type="ChEBI" id="CHEBI:57540"/>
        <dbReference type="ChEBI" id="CHEBI:57945"/>
        <dbReference type="ChEBI" id="CHEBI:132124"/>
    </reaction>
</comment>
<comment type="subunit">
    <text evidence="1">NDH-1 is composed of 14 different subunits. Subunits NuoA, H, J, K, L, M, N constitute the membrane sector of the complex.</text>
</comment>
<comment type="subcellular location">
    <subcellularLocation>
        <location evidence="1">Cell inner membrane</location>
        <topology evidence="1">Multi-pass membrane protein</topology>
    </subcellularLocation>
</comment>
<comment type="similarity">
    <text evidence="1">Belongs to the complex I subunit 4L family.</text>
</comment>
<evidence type="ECO:0000255" key="1">
    <source>
        <dbReference type="HAMAP-Rule" id="MF_01456"/>
    </source>
</evidence>
<feature type="chain" id="PRO_0000390000" description="NADH-quinone oxidoreductase subunit K">
    <location>
        <begin position="1"/>
        <end position="101"/>
    </location>
</feature>
<feature type="transmembrane region" description="Helical" evidence="1">
    <location>
        <begin position="4"/>
        <end position="24"/>
    </location>
</feature>
<feature type="transmembrane region" description="Helical" evidence="1">
    <location>
        <begin position="29"/>
        <end position="49"/>
    </location>
</feature>
<feature type="transmembrane region" description="Helical" evidence="1">
    <location>
        <begin position="61"/>
        <end position="81"/>
    </location>
</feature>
<gene>
    <name evidence="1" type="primary">nuoK</name>
    <name type="ordered locus">BTH_I1071</name>
</gene>
<name>NUOK_BURTA</name>
<sequence length="101" mass="11084">MLTLAHYLVLGAILFAIAIVGIFLNRRNIIIILMAIELMLLAVNTNFVAFSHYLGDVHGQIFVFFVLTVAAAEAAIGLAILVTLFRKLDTINVEDLDQLKG</sequence>
<organism>
    <name type="scientific">Burkholderia thailandensis (strain ATCC 700388 / DSM 13276 / CCUG 48851 / CIP 106301 / E264)</name>
    <dbReference type="NCBI Taxonomy" id="271848"/>
    <lineage>
        <taxon>Bacteria</taxon>
        <taxon>Pseudomonadati</taxon>
        <taxon>Pseudomonadota</taxon>
        <taxon>Betaproteobacteria</taxon>
        <taxon>Burkholderiales</taxon>
        <taxon>Burkholderiaceae</taxon>
        <taxon>Burkholderia</taxon>
        <taxon>pseudomallei group</taxon>
    </lineage>
</organism>
<accession>Q2SZM5</accession>